<comment type="interaction">
    <interactant intactId="EBI-2803328">
        <id>P79522</id>
    </interactant>
    <interactant intactId="EBI-1044593">
        <id>Q9NRW3</id>
        <label>APOBEC3C</label>
    </interactant>
    <organismsDiffer>false</organismsDiffer>
    <experiments>3</experiments>
</comment>
<comment type="interaction">
    <interactant intactId="EBI-2803328">
        <id>P79522</id>
    </interactant>
    <interactant intactId="EBI-749553">
        <id>Q9Y294</id>
        <label>ASF1A</label>
    </interactant>
    <organismsDiffer>false</organismsDiffer>
    <experiments>6</experiments>
</comment>
<comment type="interaction">
    <interactant intactId="EBI-2803328">
        <id>P79522</id>
    </interactant>
    <interactant intactId="EBI-2808286">
        <id>Q2TAC2</id>
        <label>CCDC57</label>
    </interactant>
    <organismsDiffer>false</organismsDiffer>
    <experiments>3</experiments>
</comment>
<comment type="interaction">
    <interactant intactId="EBI-2803328">
        <id>P79522</id>
    </interactant>
    <interactant intactId="EBI-2559831">
        <id>Q92989</id>
        <label>CLP1</label>
    </interactant>
    <organismsDiffer>false</organismsDiffer>
    <experiments>3</experiments>
</comment>
<comment type="interaction">
    <interactant intactId="EBI-2803328">
        <id>P79522</id>
    </interactant>
    <interactant intactId="EBI-10226858">
        <id>Q0VDC6</id>
        <label>FKBP1A</label>
    </interactant>
    <organismsDiffer>false</organismsDiffer>
    <experiments>3</experiments>
</comment>
<comment type="interaction">
    <interactant intactId="EBI-2803328">
        <id>P79522</id>
    </interactant>
    <interactant intactId="EBI-304185">
        <id>P61978</id>
        <label>HNRNPK</label>
    </interactant>
    <organismsDiffer>false</organismsDiffer>
    <experiments>9</experiments>
</comment>
<comment type="interaction">
    <interactant intactId="EBI-2803328">
        <id>P79522</id>
    </interactant>
    <interactant intactId="EBI-7060731">
        <id>P61978-2</id>
        <label>HNRNPK</label>
    </interactant>
    <organismsDiffer>false</organismsDiffer>
    <experiments>5</experiments>
</comment>
<comment type="interaction">
    <interactant intactId="EBI-2803328">
        <id>P79522</id>
    </interactant>
    <interactant intactId="EBI-356991">
        <id>P54652</id>
        <label>HSPA2</label>
    </interactant>
    <organismsDiffer>false</organismsDiffer>
    <experiments>3</experiments>
</comment>
<comment type="interaction">
    <interactant intactId="EBI-2803328">
        <id>P79522</id>
    </interactant>
    <interactant intactId="EBI-742808">
        <id>Q5VWX1</id>
        <label>KHDRBS2</label>
    </interactant>
    <organismsDiffer>false</organismsDiffer>
    <experiments>6</experiments>
</comment>
<comment type="interaction">
    <interactant intactId="EBI-2803328">
        <id>P79522</id>
    </interactant>
    <interactant intactId="EBI-722504">
        <id>O75525</id>
        <label>KHDRBS3</label>
    </interactant>
    <organismsDiffer>false</organismsDiffer>
    <experiments>3</experiments>
</comment>
<comment type="interaction">
    <interactant intactId="EBI-2803328">
        <id>P79522</id>
    </interactant>
    <interactant intactId="EBI-8284732">
        <id>Q13351</id>
        <label>KLF1</label>
    </interactant>
    <organismsDiffer>false</organismsDiffer>
    <experiments>3</experiments>
</comment>
<comment type="interaction">
    <interactant intactId="EBI-2803328">
        <id>P79522</id>
    </interactant>
    <interactant intactId="EBI-11962084">
        <id>Q3LI66</id>
        <label>KRTAP6-2</label>
    </interactant>
    <organismsDiffer>false</organismsDiffer>
    <experiments>3</experiments>
</comment>
<comment type="interaction">
    <interactant intactId="EBI-2803328">
        <id>P79522</id>
    </interactant>
    <interactant intactId="EBI-22311199">
        <id>Q3LI67</id>
        <label>KRTAP6-3</label>
    </interactant>
    <organismsDiffer>false</organismsDiffer>
    <experiments>3</experiments>
</comment>
<comment type="interaction">
    <interactant intactId="EBI-2803328">
        <id>P79522</id>
    </interactant>
    <interactant intactId="EBI-2858213">
        <id>Q86VE0</id>
        <label>MYPOP</label>
    </interactant>
    <organismsDiffer>false</organismsDiffer>
    <experiments>3</experiments>
</comment>
<comment type="interaction">
    <interactant intactId="EBI-2803328">
        <id>P79522</id>
    </interactant>
    <interactant intactId="EBI-398874">
        <id>Q9UBU9</id>
        <label>NXF1</label>
    </interactant>
    <organismsDiffer>false</organismsDiffer>
    <experiments>3</experiments>
</comment>
<comment type="interaction">
    <interactant intactId="EBI-2803328">
        <id>P79522</id>
    </interactant>
    <interactant intactId="EBI-348380">
        <id>P25788</id>
        <label>PSMA3</label>
    </interactant>
    <organismsDiffer>false</organismsDiffer>
    <experiments>3</experiments>
</comment>
<comment type="interaction">
    <interactant intactId="EBI-2803328">
        <id>P79522</id>
    </interactant>
    <interactant intactId="EBI-744023">
        <id>Q9BTL3</id>
        <label>RAMAC</label>
    </interactant>
    <organismsDiffer>false</organismsDiffer>
    <experiments>3</experiments>
</comment>
<comment type="interaction">
    <interactant intactId="EBI-2803328">
        <id>P79522</id>
    </interactant>
    <interactant intactId="EBI-2949699">
        <id>P98179</id>
        <label>RBM3</label>
    </interactant>
    <organismsDiffer>false</organismsDiffer>
    <experiments>3</experiments>
</comment>
<comment type="interaction">
    <interactant intactId="EBI-2803328">
        <id>P79522</id>
    </interactant>
    <interactant intactId="EBI-743526">
        <id>P38159</id>
        <label>RBMX</label>
    </interactant>
    <organismsDiffer>false</organismsDiffer>
    <experiments>6</experiments>
</comment>
<comment type="interaction">
    <interactant intactId="EBI-2803328">
        <id>P79522</id>
    </interactant>
    <interactant intactId="EBI-8638511">
        <id>P0DJD3</id>
        <label>RBMY1A1</label>
    </interactant>
    <organismsDiffer>false</organismsDiffer>
    <experiments>3</experiments>
</comment>
<comment type="interaction">
    <interactant intactId="EBI-2803328">
        <id>P79522</id>
    </interactant>
    <interactant intactId="EBI-11994018">
        <id>P0DJD3-2</id>
        <label>RBMY1A1</label>
    </interactant>
    <organismsDiffer>false</organismsDiffer>
    <experiments>3</experiments>
</comment>
<comment type="interaction">
    <interactant intactId="EBI-2803328">
        <id>P79522</id>
    </interactant>
    <interactant intactId="EBI-8642021">
        <id>Q15415</id>
        <label>RBMY1J</label>
    </interactant>
    <organismsDiffer>false</organismsDiffer>
    <experiments>7</experiments>
</comment>
<comment type="interaction">
    <interactant intactId="EBI-2803328">
        <id>P79522</id>
    </interactant>
    <interactant intactId="EBI-1053431">
        <id>P49591</id>
        <label>SARS1</label>
    </interactant>
    <organismsDiffer>false</organismsDiffer>
    <experiments>3</experiments>
</comment>
<comment type="interaction">
    <interactant intactId="EBI-2803328">
        <id>P79522</id>
    </interactant>
    <interactant intactId="EBI-717810">
        <id>Q08117</id>
        <label>TLE5</label>
    </interactant>
    <organismsDiffer>false</organismsDiffer>
    <experiments>3</experiments>
</comment>
<comment type="interaction">
    <interactant intactId="EBI-2803328">
        <id>P79522</id>
    </interactant>
    <interactant intactId="EBI-11741437">
        <id>Q08117-2</id>
        <label>TLE5</label>
    </interactant>
    <organismsDiffer>false</organismsDiffer>
    <experiments>3</experiments>
</comment>
<comment type="alternative products">
    <event type="alternative splicing"/>
    <isoform>
        <id>P79522-1</id>
        <name>1</name>
        <sequence type="displayed"/>
    </isoform>
    <isoform>
        <id>P79522-2</id>
        <name>2</name>
        <sequence type="described" ref="VSP_012818"/>
    </isoform>
</comment>
<comment type="sequence caution" evidence="4">
    <conflict type="erroneous initiation">
        <sequence resource="EMBL-CDS" id="AAB40147"/>
    </conflict>
</comment>
<proteinExistence type="evidence at protein level"/>
<organism>
    <name type="scientific">Homo sapiens</name>
    <name type="common">Human</name>
    <dbReference type="NCBI Taxonomy" id="9606"/>
    <lineage>
        <taxon>Eukaryota</taxon>
        <taxon>Metazoa</taxon>
        <taxon>Chordata</taxon>
        <taxon>Craniata</taxon>
        <taxon>Vertebrata</taxon>
        <taxon>Euteleostomi</taxon>
        <taxon>Mammalia</taxon>
        <taxon>Eutheria</taxon>
        <taxon>Euarchontoglires</taxon>
        <taxon>Primates</taxon>
        <taxon>Haplorrhini</taxon>
        <taxon>Catarrhini</taxon>
        <taxon>Hominidae</taxon>
        <taxon>Homo</taxon>
    </lineage>
</organism>
<name>PRR3_HUMAN</name>
<keyword id="KW-0025">Alternative splicing</keyword>
<keyword id="KW-0479">Metal-binding</keyword>
<keyword id="KW-1267">Proteomics identification</keyword>
<keyword id="KW-1185">Reference proteome</keyword>
<keyword id="KW-0677">Repeat</keyword>
<keyword id="KW-0862">Zinc</keyword>
<keyword id="KW-0863">Zinc-finger</keyword>
<gene>
    <name type="primary">PRR3</name>
    <name type="synonym">CAT56</name>
</gene>
<reference key="1">
    <citation type="submission" date="1996-07" db="EMBL/GenBank/DDBJ databases">
        <title>Human proline rich sequence (CAT 56) from the MHC class I region.</title>
        <authorList>
            <person name="Wei H."/>
            <person name="Weissman S.M."/>
        </authorList>
    </citation>
    <scope>NUCLEOTIDE SEQUENCE [MRNA] (ISOFORM 1)</scope>
</reference>
<reference key="2">
    <citation type="journal article" date="2003" name="Nature">
        <title>The DNA sequence and analysis of human chromosome 6.</title>
        <authorList>
            <person name="Mungall A.J."/>
            <person name="Palmer S.A."/>
            <person name="Sims S.K."/>
            <person name="Edwards C.A."/>
            <person name="Ashurst J.L."/>
            <person name="Wilming L."/>
            <person name="Jones M.C."/>
            <person name="Horton R."/>
            <person name="Hunt S.E."/>
            <person name="Scott C.E."/>
            <person name="Gilbert J.G.R."/>
            <person name="Clamp M.E."/>
            <person name="Bethel G."/>
            <person name="Milne S."/>
            <person name="Ainscough R."/>
            <person name="Almeida J.P."/>
            <person name="Ambrose K.D."/>
            <person name="Andrews T.D."/>
            <person name="Ashwell R.I.S."/>
            <person name="Babbage A.K."/>
            <person name="Bagguley C.L."/>
            <person name="Bailey J."/>
            <person name="Banerjee R."/>
            <person name="Barker D.J."/>
            <person name="Barlow K.F."/>
            <person name="Bates K."/>
            <person name="Beare D.M."/>
            <person name="Beasley H."/>
            <person name="Beasley O."/>
            <person name="Bird C.P."/>
            <person name="Blakey S.E."/>
            <person name="Bray-Allen S."/>
            <person name="Brook J."/>
            <person name="Brown A.J."/>
            <person name="Brown J.Y."/>
            <person name="Burford D.C."/>
            <person name="Burrill W."/>
            <person name="Burton J."/>
            <person name="Carder C."/>
            <person name="Carter N.P."/>
            <person name="Chapman J.C."/>
            <person name="Clark S.Y."/>
            <person name="Clark G."/>
            <person name="Clee C.M."/>
            <person name="Clegg S."/>
            <person name="Cobley V."/>
            <person name="Collier R.E."/>
            <person name="Collins J.E."/>
            <person name="Colman L.K."/>
            <person name="Corby N.R."/>
            <person name="Coville G.J."/>
            <person name="Culley K.M."/>
            <person name="Dhami P."/>
            <person name="Davies J."/>
            <person name="Dunn M."/>
            <person name="Earthrowl M.E."/>
            <person name="Ellington A.E."/>
            <person name="Evans K.A."/>
            <person name="Faulkner L."/>
            <person name="Francis M.D."/>
            <person name="Frankish A."/>
            <person name="Frankland J."/>
            <person name="French L."/>
            <person name="Garner P."/>
            <person name="Garnett J."/>
            <person name="Ghori M.J."/>
            <person name="Gilby L.M."/>
            <person name="Gillson C.J."/>
            <person name="Glithero R.J."/>
            <person name="Grafham D.V."/>
            <person name="Grant M."/>
            <person name="Gribble S."/>
            <person name="Griffiths C."/>
            <person name="Griffiths M.N.D."/>
            <person name="Hall R."/>
            <person name="Halls K.S."/>
            <person name="Hammond S."/>
            <person name="Harley J.L."/>
            <person name="Hart E.A."/>
            <person name="Heath P.D."/>
            <person name="Heathcott R."/>
            <person name="Holmes S.J."/>
            <person name="Howden P.J."/>
            <person name="Howe K.L."/>
            <person name="Howell G.R."/>
            <person name="Huckle E."/>
            <person name="Humphray S.J."/>
            <person name="Humphries M.D."/>
            <person name="Hunt A.R."/>
            <person name="Johnson C.M."/>
            <person name="Joy A.A."/>
            <person name="Kay M."/>
            <person name="Keenan S.J."/>
            <person name="Kimberley A.M."/>
            <person name="King A."/>
            <person name="Laird G.K."/>
            <person name="Langford C."/>
            <person name="Lawlor S."/>
            <person name="Leongamornlert D.A."/>
            <person name="Leversha M."/>
            <person name="Lloyd C.R."/>
            <person name="Lloyd D.M."/>
            <person name="Loveland J.E."/>
            <person name="Lovell J."/>
            <person name="Martin S."/>
            <person name="Mashreghi-Mohammadi M."/>
            <person name="Maslen G.L."/>
            <person name="Matthews L."/>
            <person name="McCann O.T."/>
            <person name="McLaren S.J."/>
            <person name="McLay K."/>
            <person name="McMurray A."/>
            <person name="Moore M.J.F."/>
            <person name="Mullikin J.C."/>
            <person name="Niblett D."/>
            <person name="Nickerson T."/>
            <person name="Novik K.L."/>
            <person name="Oliver K."/>
            <person name="Overton-Larty E.K."/>
            <person name="Parker A."/>
            <person name="Patel R."/>
            <person name="Pearce A.V."/>
            <person name="Peck A.I."/>
            <person name="Phillimore B.J.C.T."/>
            <person name="Phillips S."/>
            <person name="Plumb R.W."/>
            <person name="Porter K.M."/>
            <person name="Ramsey Y."/>
            <person name="Ranby S.A."/>
            <person name="Rice C.M."/>
            <person name="Ross M.T."/>
            <person name="Searle S.M."/>
            <person name="Sehra H.K."/>
            <person name="Sheridan E."/>
            <person name="Skuce C.D."/>
            <person name="Smith S."/>
            <person name="Smith M."/>
            <person name="Spraggon L."/>
            <person name="Squares S.L."/>
            <person name="Steward C.A."/>
            <person name="Sycamore N."/>
            <person name="Tamlyn-Hall G."/>
            <person name="Tester J."/>
            <person name="Theaker A.J."/>
            <person name="Thomas D.W."/>
            <person name="Thorpe A."/>
            <person name="Tracey A."/>
            <person name="Tromans A."/>
            <person name="Tubby B."/>
            <person name="Wall M."/>
            <person name="Wallis J.M."/>
            <person name="West A.P."/>
            <person name="White S.S."/>
            <person name="Whitehead S.L."/>
            <person name="Whittaker H."/>
            <person name="Wild A."/>
            <person name="Willey D.J."/>
            <person name="Wilmer T.E."/>
            <person name="Wood J.M."/>
            <person name="Wray P.W."/>
            <person name="Wyatt J.C."/>
            <person name="Young L."/>
            <person name="Younger R.M."/>
            <person name="Bentley D.R."/>
            <person name="Coulson A."/>
            <person name="Durbin R.M."/>
            <person name="Hubbard T."/>
            <person name="Sulston J.E."/>
            <person name="Dunham I."/>
            <person name="Rogers J."/>
            <person name="Beck S."/>
        </authorList>
    </citation>
    <scope>NUCLEOTIDE SEQUENCE [LARGE SCALE GENOMIC DNA]</scope>
</reference>
<reference key="3">
    <citation type="journal article" date="2004" name="Genome Res.">
        <title>The status, quality, and expansion of the NIH full-length cDNA project: the Mammalian Gene Collection (MGC).</title>
        <authorList>
            <consortium name="The MGC Project Team"/>
        </authorList>
    </citation>
    <scope>NUCLEOTIDE SEQUENCE [LARGE SCALE MRNA] (ISOFORM 1)</scope>
    <scope>VARIANT SER-61</scope>
</reference>
<evidence type="ECO:0000255" key="1">
    <source>
        <dbReference type="PROSITE-ProRule" id="PRU00723"/>
    </source>
</evidence>
<evidence type="ECO:0000256" key="2">
    <source>
        <dbReference type="SAM" id="MobiDB-lite"/>
    </source>
</evidence>
<evidence type="ECO:0000269" key="3">
    <source>
    </source>
</evidence>
<evidence type="ECO:0000305" key="4"/>
<dbReference type="EMBL" id="U63336">
    <property type="protein sequence ID" value="AAB40147.1"/>
    <property type="status" value="ALT_INIT"/>
    <property type="molecule type" value="mRNA"/>
</dbReference>
<dbReference type="EMBL" id="AL662825">
    <property type="status" value="NOT_ANNOTATED_CDS"/>
    <property type="molecule type" value="Genomic_DNA"/>
</dbReference>
<dbReference type="EMBL" id="AL662800">
    <property type="status" value="NOT_ANNOTATED_CDS"/>
    <property type="molecule type" value="Genomic_DNA"/>
</dbReference>
<dbReference type="EMBL" id="BX000357">
    <property type="status" value="NOT_ANNOTATED_CDS"/>
    <property type="molecule type" value="Genomic_DNA"/>
</dbReference>
<dbReference type="EMBL" id="BX248518">
    <property type="status" value="NOT_ANNOTATED_CDS"/>
    <property type="molecule type" value="Genomic_DNA"/>
</dbReference>
<dbReference type="EMBL" id="BX927220">
    <property type="status" value="NOT_ANNOTATED_CDS"/>
    <property type="molecule type" value="Genomic_DNA"/>
</dbReference>
<dbReference type="EMBL" id="CR388372">
    <property type="status" value="NOT_ANNOTATED_CDS"/>
    <property type="molecule type" value="Genomic_DNA"/>
</dbReference>
<dbReference type="EMBL" id="CR847863">
    <property type="status" value="NOT_ANNOTATED_CDS"/>
    <property type="molecule type" value="Genomic_DNA"/>
</dbReference>
<dbReference type="EMBL" id="BC126457">
    <property type="protein sequence ID" value="AAI26458.1"/>
    <property type="molecule type" value="mRNA"/>
</dbReference>
<dbReference type="CCDS" id="CCDS43440.1">
    <molecule id="P79522-1"/>
</dbReference>
<dbReference type="CCDS" id="CCDS43441.1">
    <molecule id="P79522-2"/>
</dbReference>
<dbReference type="RefSeq" id="NP_001070965.1">
    <molecule id="P79522-2"/>
    <property type="nucleotide sequence ID" value="NM_001077497.3"/>
</dbReference>
<dbReference type="RefSeq" id="NP_079539.2">
    <molecule id="P79522-1"/>
    <property type="nucleotide sequence ID" value="NM_025263.4"/>
</dbReference>
<dbReference type="SMR" id="P79522"/>
<dbReference type="BioGRID" id="123286">
    <property type="interactions" value="263"/>
</dbReference>
<dbReference type="FunCoup" id="P79522">
    <property type="interactions" value="1282"/>
</dbReference>
<dbReference type="IntAct" id="P79522">
    <property type="interactions" value="234"/>
</dbReference>
<dbReference type="STRING" id="9606.ENSP00000365744"/>
<dbReference type="iPTMnet" id="P79522"/>
<dbReference type="MetOSite" id="P79522"/>
<dbReference type="PhosphoSitePlus" id="P79522"/>
<dbReference type="BioMuta" id="PRR3"/>
<dbReference type="DMDM" id="59798092"/>
<dbReference type="jPOST" id="P79522"/>
<dbReference type="MassIVE" id="P79522"/>
<dbReference type="PaxDb" id="9606-ENSP00000365744"/>
<dbReference type="PeptideAtlas" id="P79522"/>
<dbReference type="ProteomicsDB" id="57662">
    <molecule id="P79522-1"/>
</dbReference>
<dbReference type="ProteomicsDB" id="57663">
    <molecule id="P79522-2"/>
</dbReference>
<dbReference type="Pumba" id="P79522"/>
<dbReference type="Antibodypedia" id="67374">
    <property type="antibodies" value="29 antibodies from 8 providers"/>
</dbReference>
<dbReference type="DNASU" id="80742"/>
<dbReference type="Ensembl" id="ENST00000376557.3">
    <molecule id="P79522-2"/>
    <property type="protein sequence ID" value="ENSP00000365740.3"/>
    <property type="gene ID" value="ENSG00000204576.12"/>
</dbReference>
<dbReference type="Ensembl" id="ENST00000376560.8">
    <molecule id="P79522-1"/>
    <property type="protein sequence ID" value="ENSP00000365744.4"/>
    <property type="gene ID" value="ENSG00000204576.12"/>
</dbReference>
<dbReference type="Ensembl" id="ENST00000383592.8">
    <molecule id="P79522-1"/>
    <property type="protein sequence ID" value="ENSP00000373086.4"/>
    <property type="gene ID" value="ENSG00000206491.12"/>
</dbReference>
<dbReference type="Ensembl" id="ENST00000418065.2">
    <molecule id="P79522-2"/>
    <property type="protein sequence ID" value="ENSP00000404669.2"/>
    <property type="gene ID" value="ENSG00000206491.12"/>
</dbReference>
<dbReference type="Ensembl" id="ENST00000422140.2">
    <molecule id="P79522-2"/>
    <property type="protein sequence ID" value="ENSP00000411802.2"/>
    <property type="gene ID" value="ENSG00000228186.10"/>
</dbReference>
<dbReference type="Ensembl" id="ENST00000422639.2">
    <molecule id="P79522-2"/>
    <property type="protein sequence ID" value="ENSP00000401499.2"/>
    <property type="gene ID" value="ENSG00000229202.10"/>
</dbReference>
<dbReference type="Ensembl" id="ENST00000427729.6">
    <molecule id="P79522-1"/>
    <property type="protein sequence ID" value="ENSP00000402596.2"/>
    <property type="gene ID" value="ENSG00000223766.10"/>
</dbReference>
<dbReference type="Ensembl" id="ENST00000432371.6">
    <molecule id="P79522-1"/>
    <property type="protein sequence ID" value="ENSP00000396416.2"/>
    <property type="gene ID" value="ENSG00000228186.10"/>
</dbReference>
<dbReference type="Ensembl" id="ENST00000436805.2">
    <molecule id="P79522-2"/>
    <property type="protein sequence ID" value="ENSP00000406321.2"/>
    <property type="gene ID" value="ENSG00000233564.10"/>
</dbReference>
<dbReference type="Ensembl" id="ENST00000442290.2">
    <molecule id="P79522-2"/>
    <property type="protein sequence ID" value="ENSP00000401612.2"/>
    <property type="gene ID" value="ENSG00000223887.10"/>
</dbReference>
<dbReference type="Ensembl" id="ENST00000444972.2">
    <molecule id="P79522-2"/>
    <property type="protein sequence ID" value="ENSP00000393410.2"/>
    <property type="gene ID" value="ENSG00000223766.10"/>
</dbReference>
<dbReference type="Ensembl" id="ENST00000449754.6">
    <molecule id="P79522-1"/>
    <property type="protein sequence ID" value="ENSP00000398352.2"/>
    <property type="gene ID" value="ENSG00000233564.10"/>
</dbReference>
<dbReference type="Ensembl" id="ENST00000453232.6">
    <molecule id="P79522-1"/>
    <property type="protein sequence ID" value="ENSP00000415432.2"/>
    <property type="gene ID" value="ENSG00000229202.10"/>
</dbReference>
<dbReference type="Ensembl" id="ENST00000454399.6">
    <molecule id="P79522-1"/>
    <property type="protein sequence ID" value="ENSP00000392826.2"/>
    <property type="gene ID" value="ENSG00000223887.10"/>
</dbReference>
<dbReference type="GeneID" id="80742"/>
<dbReference type="KEGG" id="hsa:80742"/>
<dbReference type="MANE-Select" id="ENST00000376560.8">
    <property type="protein sequence ID" value="ENSP00000365744.4"/>
    <property type="RefSeq nucleotide sequence ID" value="NM_025263.4"/>
    <property type="RefSeq protein sequence ID" value="NP_079539.2"/>
</dbReference>
<dbReference type="UCSC" id="uc003nqj.3">
    <molecule id="P79522-1"/>
    <property type="organism name" value="human"/>
</dbReference>
<dbReference type="AGR" id="HGNC:21149"/>
<dbReference type="CTD" id="80742"/>
<dbReference type="DisGeNET" id="80742"/>
<dbReference type="GeneCards" id="PRR3"/>
<dbReference type="HGNC" id="HGNC:21149">
    <property type="gene designation" value="PRR3"/>
</dbReference>
<dbReference type="HPA" id="ENSG00000204576">
    <property type="expression patterns" value="Tissue enhanced (brain)"/>
</dbReference>
<dbReference type="neXtProt" id="NX_P79522"/>
<dbReference type="OpenTargets" id="ENSG00000204576"/>
<dbReference type="PharmGKB" id="PA134950097"/>
<dbReference type="VEuPathDB" id="HostDB:ENSG00000204576"/>
<dbReference type="eggNOG" id="ENOG502TAPB">
    <property type="taxonomic scope" value="Eukaryota"/>
</dbReference>
<dbReference type="GeneTree" id="ENSGT00940000161804"/>
<dbReference type="HOGENOM" id="CLU_112270_0_0_1"/>
<dbReference type="InParanoid" id="P79522"/>
<dbReference type="OMA" id="GHGWWGV"/>
<dbReference type="OrthoDB" id="9837419at2759"/>
<dbReference type="PAN-GO" id="P79522">
    <property type="GO annotations" value="0 GO annotations based on evolutionary models"/>
</dbReference>
<dbReference type="PhylomeDB" id="P79522"/>
<dbReference type="TreeFam" id="TF337284"/>
<dbReference type="PathwayCommons" id="P79522"/>
<dbReference type="SignaLink" id="P79522"/>
<dbReference type="BioGRID-ORCS" id="80742">
    <property type="hits" value="21 hits in 1160 CRISPR screens"/>
</dbReference>
<dbReference type="ChiTaRS" id="PRR3">
    <property type="organism name" value="human"/>
</dbReference>
<dbReference type="GenomeRNAi" id="80742"/>
<dbReference type="Pharos" id="P79522">
    <property type="development level" value="Tdark"/>
</dbReference>
<dbReference type="PRO" id="PR:P79522"/>
<dbReference type="Proteomes" id="UP000005640">
    <property type="component" value="Chromosome 6"/>
</dbReference>
<dbReference type="RNAct" id="P79522">
    <property type="molecule type" value="protein"/>
</dbReference>
<dbReference type="Bgee" id="ENSG00000204576">
    <property type="expression patterns" value="Expressed in cortical plate and 98 other cell types or tissues"/>
</dbReference>
<dbReference type="ExpressionAtlas" id="P79522">
    <property type="expression patterns" value="baseline and differential"/>
</dbReference>
<dbReference type="GO" id="GO:0003723">
    <property type="term" value="F:RNA binding"/>
    <property type="evidence" value="ECO:0007005"/>
    <property type="project" value="UniProtKB"/>
</dbReference>
<dbReference type="GO" id="GO:0008270">
    <property type="term" value="F:zinc ion binding"/>
    <property type="evidence" value="ECO:0007669"/>
    <property type="project" value="UniProtKB-KW"/>
</dbReference>
<dbReference type="Gene3D" id="4.10.1000.10">
    <property type="entry name" value="Zinc finger, CCCH-type"/>
    <property type="match status" value="1"/>
</dbReference>
<dbReference type="InterPro" id="IPR042805">
    <property type="entry name" value="PRR3"/>
</dbReference>
<dbReference type="InterPro" id="IPR000571">
    <property type="entry name" value="Znf_CCCH"/>
</dbReference>
<dbReference type="InterPro" id="IPR036855">
    <property type="entry name" value="Znf_CCCH_sf"/>
</dbReference>
<dbReference type="PANTHER" id="PTHR47398">
    <property type="entry name" value="PROLINE-RICH PROTEIN 3"/>
    <property type="match status" value="1"/>
</dbReference>
<dbReference type="PANTHER" id="PTHR47398:SF1">
    <property type="entry name" value="PROLINE-RICH PROTEIN 3-RELATED"/>
    <property type="match status" value="1"/>
</dbReference>
<dbReference type="Pfam" id="PF00642">
    <property type="entry name" value="zf-CCCH"/>
    <property type="match status" value="1"/>
</dbReference>
<dbReference type="SMART" id="SM00356">
    <property type="entry name" value="ZnF_C3H1"/>
    <property type="match status" value="1"/>
</dbReference>
<dbReference type="SUPFAM" id="SSF90229">
    <property type="entry name" value="CCCH zinc finger"/>
    <property type="match status" value="1"/>
</dbReference>
<dbReference type="PROSITE" id="PS50103">
    <property type="entry name" value="ZF_C3H1"/>
    <property type="match status" value="1"/>
</dbReference>
<feature type="chain" id="PRO_0000213889" description="Proline-rich protein 3">
    <location>
        <begin position="1"/>
        <end position="188"/>
    </location>
</feature>
<feature type="zinc finger region" description="C3H1-type" evidence="1">
    <location>
        <begin position="155"/>
        <end position="183"/>
    </location>
</feature>
<feature type="region of interest" description="Disordered" evidence="2">
    <location>
        <begin position="1"/>
        <end position="157"/>
    </location>
</feature>
<feature type="compositionally biased region" description="Pro residues" evidence="2">
    <location>
        <begin position="35"/>
        <end position="46"/>
    </location>
</feature>
<feature type="compositionally biased region" description="Pro residues" evidence="2">
    <location>
        <begin position="69"/>
        <end position="82"/>
    </location>
</feature>
<feature type="compositionally biased region" description="Low complexity" evidence="2">
    <location>
        <begin position="83"/>
        <end position="96"/>
    </location>
</feature>
<feature type="compositionally biased region" description="Basic and acidic residues" evidence="2">
    <location>
        <begin position="145"/>
        <end position="157"/>
    </location>
</feature>
<feature type="splice variant" id="VSP_012818" description="In isoform 2." evidence="4">
    <location>
        <begin position="36"/>
        <end position="56"/>
    </location>
</feature>
<feature type="sequence variant" id="VAR_052963" description="In dbSNP:rs3888778." evidence="3">
    <original>G</original>
    <variation>S</variation>
    <location>
        <position position="61"/>
    </location>
</feature>
<accession>P79522</accession>
<accession>A1A4H4</accession>
<accession>Q5RJB5</accession>
<accession>Q5STN6</accession>
<protein>
    <recommendedName>
        <fullName>Proline-rich protein 3</fullName>
    </recommendedName>
    <alternativeName>
        <fullName>MHC class I region proline-rich protein CAT56</fullName>
    </alternativeName>
</protein>
<sequence>MPKRKKQNHHQPPTQQQPPLPEREETGDEEDGSPIGPPSLLGPPPMANGKPGDPKSALHRGPPGSRGPLIPPLLSLPPPPWGRGPIRRGLGPRSSPYGRGWWGVNAEPPFPGPGHGGPTRGSFHKEQRNPRRLKSWSLIKNTCPPKDDPQVMEDKSDRPVCRHFAKKGHCRYEDLCAFYHPGVNGPPL</sequence>